<evidence type="ECO:0000255" key="1">
    <source>
        <dbReference type="HAMAP-Rule" id="MF_00185"/>
    </source>
</evidence>
<accession>P74040</accession>
<comment type="function">
    <text evidence="1">Catalyzes the transfer of a dimethylallyl group onto the adenine at position 37 in tRNAs that read codons beginning with uridine, leading to the formation of N6-(dimethylallyl)adenosine (i(6)A).</text>
</comment>
<comment type="catalytic activity">
    <reaction evidence="1">
        <text>adenosine(37) in tRNA + dimethylallyl diphosphate = N(6)-dimethylallyladenosine(37) in tRNA + diphosphate</text>
        <dbReference type="Rhea" id="RHEA:26482"/>
        <dbReference type="Rhea" id="RHEA-COMP:10162"/>
        <dbReference type="Rhea" id="RHEA-COMP:10375"/>
        <dbReference type="ChEBI" id="CHEBI:33019"/>
        <dbReference type="ChEBI" id="CHEBI:57623"/>
        <dbReference type="ChEBI" id="CHEBI:74411"/>
        <dbReference type="ChEBI" id="CHEBI:74415"/>
        <dbReference type="EC" id="2.5.1.75"/>
    </reaction>
</comment>
<comment type="cofactor">
    <cofactor evidence="1">
        <name>Mg(2+)</name>
        <dbReference type="ChEBI" id="CHEBI:18420"/>
    </cofactor>
</comment>
<comment type="subunit">
    <text evidence="1">Monomer.</text>
</comment>
<comment type="similarity">
    <text evidence="1">Belongs to the IPP transferase family.</text>
</comment>
<reference key="1">
    <citation type="journal article" date="1996" name="DNA Res.">
        <title>Sequence analysis of the genome of the unicellular cyanobacterium Synechocystis sp. strain PCC6803. II. Sequence determination of the entire genome and assignment of potential protein-coding regions.</title>
        <authorList>
            <person name="Kaneko T."/>
            <person name="Sato S."/>
            <person name="Kotani H."/>
            <person name="Tanaka A."/>
            <person name="Asamizu E."/>
            <person name="Nakamura Y."/>
            <person name="Miyajima N."/>
            <person name="Hirosawa M."/>
            <person name="Sugiura M."/>
            <person name="Sasamoto S."/>
            <person name="Kimura T."/>
            <person name="Hosouchi T."/>
            <person name="Matsuno A."/>
            <person name="Muraki A."/>
            <person name="Nakazaki N."/>
            <person name="Naruo K."/>
            <person name="Okumura S."/>
            <person name="Shimpo S."/>
            <person name="Takeuchi C."/>
            <person name="Wada T."/>
            <person name="Watanabe A."/>
            <person name="Yamada M."/>
            <person name="Yasuda M."/>
            <person name="Tabata S."/>
        </authorList>
    </citation>
    <scope>NUCLEOTIDE SEQUENCE [LARGE SCALE GENOMIC DNA]</scope>
    <source>
        <strain>ATCC 27184 / PCC 6803 / Kazusa</strain>
    </source>
</reference>
<proteinExistence type="inferred from homology"/>
<feature type="chain" id="PRO_0000163996" description="tRNA dimethylallyltransferase">
    <location>
        <begin position="1"/>
        <end position="303"/>
    </location>
</feature>
<feature type="region of interest" description="Interaction with substrate tRNA" evidence="1">
    <location>
        <begin position="37"/>
        <end position="40"/>
    </location>
</feature>
<feature type="binding site" evidence="1">
    <location>
        <begin position="12"/>
        <end position="19"/>
    </location>
    <ligand>
        <name>ATP</name>
        <dbReference type="ChEBI" id="CHEBI:30616"/>
    </ligand>
</feature>
<feature type="binding site" evidence="1">
    <location>
        <begin position="14"/>
        <end position="19"/>
    </location>
    <ligand>
        <name>substrate</name>
    </ligand>
</feature>
<feature type="site" description="Interaction with substrate tRNA" evidence="1">
    <location>
        <position position="100"/>
    </location>
</feature>
<name>MIAA_SYNY3</name>
<dbReference type="EC" id="2.5.1.75" evidence="1"/>
<dbReference type="EMBL" id="BA000022">
    <property type="protein sequence ID" value="BAA18115.1"/>
    <property type="molecule type" value="Genomic_DNA"/>
</dbReference>
<dbReference type="PIR" id="S75554">
    <property type="entry name" value="S75554"/>
</dbReference>
<dbReference type="SMR" id="P74040"/>
<dbReference type="FunCoup" id="P74040">
    <property type="interactions" value="479"/>
</dbReference>
<dbReference type="STRING" id="1148.gene:10498986"/>
<dbReference type="PaxDb" id="1148-1653199"/>
<dbReference type="EnsemblBacteria" id="BAA18115">
    <property type="protein sequence ID" value="BAA18115"/>
    <property type="gene ID" value="BAA18115"/>
</dbReference>
<dbReference type="KEGG" id="syn:sll0817"/>
<dbReference type="eggNOG" id="COG0324">
    <property type="taxonomic scope" value="Bacteria"/>
</dbReference>
<dbReference type="InParanoid" id="P74040"/>
<dbReference type="PhylomeDB" id="P74040"/>
<dbReference type="Proteomes" id="UP000001425">
    <property type="component" value="Chromosome"/>
</dbReference>
<dbReference type="GO" id="GO:0005524">
    <property type="term" value="F:ATP binding"/>
    <property type="evidence" value="ECO:0007669"/>
    <property type="project" value="UniProtKB-UniRule"/>
</dbReference>
<dbReference type="GO" id="GO:0052381">
    <property type="term" value="F:tRNA dimethylallyltransferase activity"/>
    <property type="evidence" value="ECO:0000318"/>
    <property type="project" value="GO_Central"/>
</dbReference>
<dbReference type="GO" id="GO:0006400">
    <property type="term" value="P:tRNA modification"/>
    <property type="evidence" value="ECO:0000318"/>
    <property type="project" value="GO_Central"/>
</dbReference>
<dbReference type="Gene3D" id="1.10.20.140">
    <property type="match status" value="1"/>
</dbReference>
<dbReference type="Gene3D" id="3.40.50.300">
    <property type="entry name" value="P-loop containing nucleotide triphosphate hydrolases"/>
    <property type="match status" value="1"/>
</dbReference>
<dbReference type="HAMAP" id="MF_00185">
    <property type="entry name" value="IPP_trans"/>
    <property type="match status" value="1"/>
</dbReference>
<dbReference type="InterPro" id="IPR039657">
    <property type="entry name" value="Dimethylallyltransferase"/>
</dbReference>
<dbReference type="InterPro" id="IPR018022">
    <property type="entry name" value="IPT"/>
</dbReference>
<dbReference type="InterPro" id="IPR027417">
    <property type="entry name" value="P-loop_NTPase"/>
</dbReference>
<dbReference type="NCBIfam" id="TIGR00174">
    <property type="entry name" value="miaA"/>
    <property type="match status" value="1"/>
</dbReference>
<dbReference type="PANTHER" id="PTHR11088">
    <property type="entry name" value="TRNA DIMETHYLALLYLTRANSFERASE"/>
    <property type="match status" value="1"/>
</dbReference>
<dbReference type="PANTHER" id="PTHR11088:SF60">
    <property type="entry name" value="TRNA DIMETHYLALLYLTRANSFERASE"/>
    <property type="match status" value="1"/>
</dbReference>
<dbReference type="Pfam" id="PF01715">
    <property type="entry name" value="IPPT"/>
    <property type="match status" value="1"/>
</dbReference>
<dbReference type="SUPFAM" id="SSF52540">
    <property type="entry name" value="P-loop containing nucleoside triphosphate hydrolases"/>
    <property type="match status" value="1"/>
</dbReference>
<sequence length="303" mass="33562">MAKVPPLIVICGTTASGKSQLALDLAQRLNAVILGADSRQIYKELDIGTAKPTLGDRQTVPHYLIDICEPTENFTLAEYQRQAQELIASLNQPILLVGGTGLYIQAIVKGLKIPAVPPQTNLREQLANLGQPFCYQLLSQVDPVAQSKIEPADVVRTLRALEVFYATGRPISSLQGENPPSYPIVQIGLGLEPEQLQPRIVHRTHAMVEAGLVKEVEGLINQYGEDLPLLHTLGYAEIKQYLQGQISLTQATESIIVHTRQFAKRQRTWFRKDSAIHWFDANQPNLLDSVTKLVQVDVNEGMF</sequence>
<gene>
    <name evidence="1" type="primary">miaA</name>
    <name type="ordered locus">sll0817</name>
</gene>
<organism>
    <name type="scientific">Synechocystis sp. (strain ATCC 27184 / PCC 6803 / Kazusa)</name>
    <dbReference type="NCBI Taxonomy" id="1111708"/>
    <lineage>
        <taxon>Bacteria</taxon>
        <taxon>Bacillati</taxon>
        <taxon>Cyanobacteriota</taxon>
        <taxon>Cyanophyceae</taxon>
        <taxon>Synechococcales</taxon>
        <taxon>Merismopediaceae</taxon>
        <taxon>Synechocystis</taxon>
    </lineage>
</organism>
<keyword id="KW-0067">ATP-binding</keyword>
<keyword id="KW-0460">Magnesium</keyword>
<keyword id="KW-0547">Nucleotide-binding</keyword>
<keyword id="KW-1185">Reference proteome</keyword>
<keyword id="KW-0808">Transferase</keyword>
<keyword id="KW-0819">tRNA processing</keyword>
<protein>
    <recommendedName>
        <fullName evidence="1">tRNA dimethylallyltransferase</fullName>
        <ecNumber evidence="1">2.5.1.75</ecNumber>
    </recommendedName>
    <alternativeName>
        <fullName evidence="1">Dimethylallyl diphosphate:tRNA dimethylallyltransferase</fullName>
        <shortName evidence="1">DMAPP:tRNA dimethylallyltransferase</shortName>
        <shortName evidence="1">DMATase</shortName>
    </alternativeName>
    <alternativeName>
        <fullName evidence="1">Isopentenyl-diphosphate:tRNA isopentenyltransferase</fullName>
        <shortName evidence="1">IPP transferase</shortName>
        <shortName evidence="1">IPPT</shortName>
        <shortName evidence="1">IPTase</shortName>
    </alternativeName>
</protein>